<accession>B1IUI1</accession>
<gene>
    <name evidence="1" type="primary">nrfA</name>
    <name type="ordered locus">EcolC_3957</name>
</gene>
<comment type="function">
    <text evidence="1">Catalyzes the reduction of nitrite to ammonia, consuming six electrons in the process.</text>
</comment>
<comment type="catalytic activity">
    <reaction evidence="1">
        <text>6 Fe(III)-[cytochrome c] + NH4(+) + 2 H2O = 6 Fe(II)-[cytochrome c] + nitrite + 8 H(+)</text>
        <dbReference type="Rhea" id="RHEA:13089"/>
        <dbReference type="Rhea" id="RHEA-COMP:10350"/>
        <dbReference type="Rhea" id="RHEA-COMP:14399"/>
        <dbReference type="ChEBI" id="CHEBI:15377"/>
        <dbReference type="ChEBI" id="CHEBI:15378"/>
        <dbReference type="ChEBI" id="CHEBI:16301"/>
        <dbReference type="ChEBI" id="CHEBI:28938"/>
        <dbReference type="ChEBI" id="CHEBI:29033"/>
        <dbReference type="ChEBI" id="CHEBI:29034"/>
        <dbReference type="EC" id="1.7.2.2"/>
    </reaction>
</comment>
<comment type="cofactor">
    <cofactor evidence="1">
        <name>Ca(2+)</name>
        <dbReference type="ChEBI" id="CHEBI:29108"/>
    </cofactor>
    <text evidence="1">Binds 1 Ca(2+) ion per monomer.</text>
</comment>
<comment type="cofactor">
    <cofactor evidence="1">
        <name>heme c</name>
        <dbReference type="ChEBI" id="CHEBI:61717"/>
    </cofactor>
    <text evidence="1">Binds 5 heme c groups covalently per monomer.</text>
</comment>
<comment type="pathway">
    <text evidence="1">Nitrogen metabolism; nitrate reduction (assimilation).</text>
</comment>
<comment type="subcellular location">
    <subcellularLocation>
        <location evidence="1">Periplasm</location>
    </subcellularLocation>
</comment>
<comment type="similarity">
    <text evidence="1">Belongs to the cytochrome c-552 family.</text>
</comment>
<organism>
    <name type="scientific">Escherichia coli (strain ATCC 8739 / DSM 1576 / NBRC 3972 / NCIMB 8545 / WDCM 00012 / Crooks)</name>
    <dbReference type="NCBI Taxonomy" id="481805"/>
    <lineage>
        <taxon>Bacteria</taxon>
        <taxon>Pseudomonadati</taxon>
        <taxon>Pseudomonadota</taxon>
        <taxon>Gammaproteobacteria</taxon>
        <taxon>Enterobacterales</taxon>
        <taxon>Enterobacteriaceae</taxon>
        <taxon>Escherichia</taxon>
    </lineage>
</organism>
<name>NRFA_ECOLC</name>
<sequence>MTRIKINARRIFSLLIPFFFFTSVHAEQTAAPAKPVTVEAKNETFAPQHPDQYLSWKATSEQSERVDALAEDPRLVILWAGYPFSRDYNKPRGHAFAVTDVRETLRTGAPKNAEDGPLPMACWSCKSPDVARLIQKDGEDGYFHGKWARGGPEIVNNLGCADCHNTASPEFAKGKPELTLSRPYAARAMEAIGKPFEKAGRFDQQSMVCGQCHVEYYFDGKNKAVKFPWDDGMKVENMEQYYDKIAFSDWTNSLSKTPMLKAQHPEYETWTAGIHGKNNVTCIDCHMPKVQNAEGKLYTDHKIGNPFDNFAQTCANCHTQDKAALQKVVAERKQSINDLKIKVEDQLVHAHFEAKAALDAGATEAEMKPIQDDIRHAQWRWDLAIASHGIHMHAPEEGLRMLGTAMDKAADARTKLARLLATKGITHEIQIPDISTKEKAQQAIGLNMEQIKAEKQDFIKTVIPQWEEQARKNGLLSQ</sequence>
<feature type="signal peptide" evidence="1">
    <location>
        <begin position="1"/>
        <end position="26"/>
    </location>
</feature>
<feature type="chain" id="PRO_5000314015" description="Cytochrome c-552">
    <location>
        <begin position="27"/>
        <end position="478"/>
    </location>
</feature>
<feature type="binding site" description="axial binding residue" evidence="1">
    <location>
        <position position="94"/>
    </location>
    <ligand>
        <name>heme c</name>
        <dbReference type="ChEBI" id="CHEBI:61717"/>
        <label>3</label>
    </ligand>
    <ligandPart>
        <name>Fe</name>
        <dbReference type="ChEBI" id="CHEBI:18248"/>
    </ligandPart>
</feature>
<feature type="binding site" description="covalent" evidence="1">
    <location>
        <position position="122"/>
    </location>
    <ligand>
        <name>heme</name>
        <dbReference type="ChEBI" id="CHEBI:30413"/>
        <label>1</label>
    </ligand>
</feature>
<feature type="binding site" description="covalent" evidence="1">
    <location>
        <position position="125"/>
    </location>
    <ligand>
        <name>heme</name>
        <dbReference type="ChEBI" id="CHEBI:30413"/>
        <label>1</label>
    </ligand>
</feature>
<feature type="binding site" description="axial binding residue" evidence="1">
    <location>
        <position position="126"/>
    </location>
    <ligand>
        <name>heme</name>
        <dbReference type="ChEBI" id="CHEBI:30413"/>
        <label>1</label>
    </ligand>
    <ligandPart>
        <name>Fe</name>
        <dbReference type="ChEBI" id="CHEBI:18248"/>
    </ligandPart>
</feature>
<feature type="binding site" description="covalent" evidence="1">
    <location>
        <position position="160"/>
    </location>
    <ligand>
        <name>heme c</name>
        <dbReference type="ChEBI" id="CHEBI:61717"/>
        <label>2</label>
    </ligand>
</feature>
<feature type="binding site" description="covalent" evidence="1">
    <location>
        <position position="163"/>
    </location>
    <ligand>
        <name>heme c</name>
        <dbReference type="ChEBI" id="CHEBI:61717"/>
        <label>2</label>
    </ligand>
</feature>
<feature type="binding site" description="axial binding residue" evidence="1">
    <location>
        <position position="164"/>
    </location>
    <ligand>
        <name>heme c</name>
        <dbReference type="ChEBI" id="CHEBI:61717"/>
        <label>2</label>
    </ligand>
    <ligandPart>
        <name>Fe</name>
        <dbReference type="ChEBI" id="CHEBI:18248"/>
    </ligandPart>
</feature>
<feature type="binding site" description="covalent" evidence="1">
    <location>
        <position position="209"/>
    </location>
    <ligand>
        <name>heme c</name>
        <dbReference type="ChEBI" id="CHEBI:61717"/>
        <label>3</label>
    </ligand>
</feature>
<feature type="binding site" description="covalent" evidence="1">
    <location>
        <position position="212"/>
    </location>
    <ligand>
        <name>heme c</name>
        <dbReference type="ChEBI" id="CHEBI:61717"/>
        <label>3</label>
    </ligand>
</feature>
<feature type="binding site" description="axial binding residue" evidence="1">
    <location>
        <position position="213"/>
    </location>
    <ligand>
        <name>heme c</name>
        <dbReference type="ChEBI" id="CHEBI:61717"/>
        <label>3</label>
    </ligand>
    <ligandPart>
        <name>Fe</name>
        <dbReference type="ChEBI" id="CHEBI:18248"/>
    </ligandPart>
</feature>
<feature type="binding site" evidence="1">
    <location>
        <position position="215"/>
    </location>
    <ligand>
        <name>Ca(2+)</name>
        <dbReference type="ChEBI" id="CHEBI:29108"/>
    </ligand>
</feature>
<feature type="binding site" evidence="1">
    <location>
        <position position="216"/>
    </location>
    <ligand>
        <name>Ca(2+)</name>
        <dbReference type="ChEBI" id="CHEBI:29108"/>
    </ligand>
</feature>
<feature type="binding site" evidence="1">
    <location>
        <position position="216"/>
    </location>
    <ligand>
        <name>substrate</name>
    </ligand>
</feature>
<feature type="binding site" evidence="1">
    <location>
        <position position="261"/>
    </location>
    <ligand>
        <name>Ca(2+)</name>
        <dbReference type="ChEBI" id="CHEBI:29108"/>
    </ligand>
</feature>
<feature type="binding site" evidence="1">
    <location>
        <position position="263"/>
    </location>
    <ligand>
        <name>Ca(2+)</name>
        <dbReference type="ChEBI" id="CHEBI:29108"/>
    </ligand>
</feature>
<feature type="binding site" evidence="1">
    <location>
        <position position="264"/>
    </location>
    <ligand>
        <name>substrate</name>
    </ligand>
</feature>
<feature type="binding site" description="axial binding residue" evidence="1">
    <location>
        <position position="275"/>
    </location>
    <ligand>
        <name>heme c</name>
        <dbReference type="ChEBI" id="CHEBI:61717"/>
        <label>5</label>
    </ligand>
    <ligandPart>
        <name>Fe</name>
        <dbReference type="ChEBI" id="CHEBI:18248"/>
    </ligandPart>
</feature>
<feature type="binding site" description="covalent" evidence="1">
    <location>
        <position position="282"/>
    </location>
    <ligand>
        <name>heme c</name>
        <dbReference type="ChEBI" id="CHEBI:61717"/>
        <label>4</label>
    </ligand>
</feature>
<feature type="binding site" description="covalent" evidence="1">
    <location>
        <position position="285"/>
    </location>
    <ligand>
        <name>heme c</name>
        <dbReference type="ChEBI" id="CHEBI:61717"/>
        <label>4</label>
    </ligand>
</feature>
<feature type="binding site" description="axial binding residue" evidence="1">
    <location>
        <position position="286"/>
    </location>
    <ligand>
        <name>heme c</name>
        <dbReference type="ChEBI" id="CHEBI:61717"/>
        <label>4</label>
    </ligand>
    <ligandPart>
        <name>Fe</name>
        <dbReference type="ChEBI" id="CHEBI:18248"/>
    </ligandPart>
</feature>
<feature type="binding site" description="axial binding residue" evidence="1">
    <location>
        <position position="301"/>
    </location>
    <ligand>
        <name>heme c</name>
        <dbReference type="ChEBI" id="CHEBI:61717"/>
        <label>2</label>
    </ligand>
    <ligandPart>
        <name>Fe</name>
        <dbReference type="ChEBI" id="CHEBI:18248"/>
    </ligandPart>
</feature>
<feature type="binding site" description="covalent" evidence="1">
    <location>
        <position position="314"/>
    </location>
    <ligand>
        <name>heme c</name>
        <dbReference type="ChEBI" id="CHEBI:61717"/>
        <label>5</label>
    </ligand>
</feature>
<feature type="binding site" description="covalent" evidence="1">
    <location>
        <position position="317"/>
    </location>
    <ligand>
        <name>heme c</name>
        <dbReference type="ChEBI" id="CHEBI:61717"/>
        <label>5</label>
    </ligand>
</feature>
<feature type="binding site" description="axial binding residue" evidence="1">
    <location>
        <position position="318"/>
    </location>
    <ligand>
        <name>heme c</name>
        <dbReference type="ChEBI" id="CHEBI:61717"/>
        <label>5</label>
    </ligand>
    <ligandPart>
        <name>Fe</name>
        <dbReference type="ChEBI" id="CHEBI:18248"/>
    </ligandPart>
</feature>
<feature type="binding site" description="axial binding residue" evidence="1">
    <location>
        <position position="393"/>
    </location>
    <ligand>
        <name>heme c</name>
        <dbReference type="ChEBI" id="CHEBI:61717"/>
        <label>4</label>
    </ligand>
    <ligandPart>
        <name>Fe</name>
        <dbReference type="ChEBI" id="CHEBI:18248"/>
    </ligandPart>
</feature>
<proteinExistence type="inferred from homology"/>
<protein>
    <recommendedName>
        <fullName evidence="1">Cytochrome c-552</fullName>
        <ecNumber evidence="1">1.7.2.2</ecNumber>
    </recommendedName>
    <alternativeName>
        <fullName evidence="1">Ammonia-forming cytochrome c nitrite reductase</fullName>
        <shortName evidence="1">Cytochrome c nitrite reductase</shortName>
    </alternativeName>
</protein>
<reference key="1">
    <citation type="submission" date="2008-02" db="EMBL/GenBank/DDBJ databases">
        <title>Complete sequence of Escherichia coli C str. ATCC 8739.</title>
        <authorList>
            <person name="Copeland A."/>
            <person name="Lucas S."/>
            <person name="Lapidus A."/>
            <person name="Glavina del Rio T."/>
            <person name="Dalin E."/>
            <person name="Tice H."/>
            <person name="Bruce D."/>
            <person name="Goodwin L."/>
            <person name="Pitluck S."/>
            <person name="Kiss H."/>
            <person name="Brettin T."/>
            <person name="Detter J.C."/>
            <person name="Han C."/>
            <person name="Kuske C.R."/>
            <person name="Schmutz J."/>
            <person name="Larimer F."/>
            <person name="Land M."/>
            <person name="Hauser L."/>
            <person name="Kyrpides N."/>
            <person name="Mikhailova N."/>
            <person name="Ingram L."/>
            <person name="Richardson P."/>
        </authorList>
    </citation>
    <scope>NUCLEOTIDE SEQUENCE [LARGE SCALE GENOMIC DNA]</scope>
    <source>
        <strain>ATCC 8739 / DSM 1576 / NBRC 3972 / NCIMB 8545 / WDCM 00012 / Crooks</strain>
    </source>
</reference>
<keyword id="KW-0106">Calcium</keyword>
<keyword id="KW-0249">Electron transport</keyword>
<keyword id="KW-0349">Heme</keyword>
<keyword id="KW-0408">Iron</keyword>
<keyword id="KW-0479">Metal-binding</keyword>
<keyword id="KW-0560">Oxidoreductase</keyword>
<keyword id="KW-0574">Periplasm</keyword>
<keyword id="KW-0732">Signal</keyword>
<keyword id="KW-0813">Transport</keyword>
<evidence type="ECO:0000255" key="1">
    <source>
        <dbReference type="HAMAP-Rule" id="MF_01182"/>
    </source>
</evidence>
<dbReference type="EC" id="1.7.2.2" evidence="1"/>
<dbReference type="EMBL" id="CP000946">
    <property type="protein sequence ID" value="ACA79558.1"/>
    <property type="molecule type" value="Genomic_DNA"/>
</dbReference>
<dbReference type="RefSeq" id="WP_000196875.1">
    <property type="nucleotide sequence ID" value="NZ_MTFT01000033.1"/>
</dbReference>
<dbReference type="SMR" id="B1IUI1"/>
<dbReference type="GeneID" id="93777759"/>
<dbReference type="KEGG" id="ecl:EcolC_3957"/>
<dbReference type="HOGENOM" id="CLU_035040_1_0_6"/>
<dbReference type="UniPathway" id="UPA00653"/>
<dbReference type="GO" id="GO:0030288">
    <property type="term" value="C:outer membrane-bounded periplasmic space"/>
    <property type="evidence" value="ECO:0007669"/>
    <property type="project" value="TreeGrafter"/>
</dbReference>
<dbReference type="GO" id="GO:0005509">
    <property type="term" value="F:calcium ion binding"/>
    <property type="evidence" value="ECO:0007669"/>
    <property type="project" value="UniProtKB-UniRule"/>
</dbReference>
<dbReference type="GO" id="GO:0020037">
    <property type="term" value="F:heme binding"/>
    <property type="evidence" value="ECO:0007669"/>
    <property type="project" value="InterPro"/>
</dbReference>
<dbReference type="GO" id="GO:0005506">
    <property type="term" value="F:iron ion binding"/>
    <property type="evidence" value="ECO:0007669"/>
    <property type="project" value="UniProtKB-UniRule"/>
</dbReference>
<dbReference type="GO" id="GO:0042279">
    <property type="term" value="F:nitrite reductase (cytochrome, ammonia-forming) activity"/>
    <property type="evidence" value="ECO:0007669"/>
    <property type="project" value="UniProtKB-UniRule"/>
</dbReference>
<dbReference type="GO" id="GO:0019645">
    <property type="term" value="P:anaerobic electron transport chain"/>
    <property type="evidence" value="ECO:0007669"/>
    <property type="project" value="TreeGrafter"/>
</dbReference>
<dbReference type="GO" id="GO:0042128">
    <property type="term" value="P:nitrate assimilation"/>
    <property type="evidence" value="ECO:0007669"/>
    <property type="project" value="UniProtKB-UniRule"/>
</dbReference>
<dbReference type="CDD" id="cd00548">
    <property type="entry name" value="NrfA-like"/>
    <property type="match status" value="1"/>
</dbReference>
<dbReference type="FunFam" id="1.10.1130.10:FF:000002">
    <property type="entry name" value="Cytochrome c-552"/>
    <property type="match status" value="1"/>
</dbReference>
<dbReference type="FunFam" id="1.20.140.10:FF:000014">
    <property type="entry name" value="Cytochrome c-552"/>
    <property type="match status" value="1"/>
</dbReference>
<dbReference type="Gene3D" id="1.20.140.10">
    <property type="entry name" value="Butyryl-CoA Dehydrogenase, subunit A, domain 3"/>
    <property type="match status" value="1"/>
</dbReference>
<dbReference type="Gene3D" id="1.10.1130.10">
    <property type="entry name" value="Flavocytochrome C3, Chain A"/>
    <property type="match status" value="1"/>
</dbReference>
<dbReference type="HAMAP" id="MF_01182">
    <property type="entry name" value="Cytochrom_C552"/>
    <property type="match status" value="1"/>
</dbReference>
<dbReference type="InterPro" id="IPR003321">
    <property type="entry name" value="Cyt_c552"/>
</dbReference>
<dbReference type="InterPro" id="IPR017570">
    <property type="entry name" value="Cyt_c_NO2Rdtase_formate-dep"/>
</dbReference>
<dbReference type="InterPro" id="IPR036280">
    <property type="entry name" value="Multihaem_cyt_sf"/>
</dbReference>
<dbReference type="NCBIfam" id="TIGR03152">
    <property type="entry name" value="cyto_c552_HCOOH"/>
    <property type="match status" value="1"/>
</dbReference>
<dbReference type="NCBIfam" id="NF008339">
    <property type="entry name" value="PRK11125.1"/>
    <property type="match status" value="1"/>
</dbReference>
<dbReference type="PANTHER" id="PTHR30633:SF0">
    <property type="entry name" value="CYTOCHROME C-552"/>
    <property type="match status" value="1"/>
</dbReference>
<dbReference type="PANTHER" id="PTHR30633">
    <property type="entry name" value="CYTOCHROME C-552 RESPIRATORY NITRITE REDUCTASE"/>
    <property type="match status" value="1"/>
</dbReference>
<dbReference type="Pfam" id="PF02335">
    <property type="entry name" value="Cytochrom_C552"/>
    <property type="match status" value="1"/>
</dbReference>
<dbReference type="PIRSF" id="PIRSF000243">
    <property type="entry name" value="Cyt_c552"/>
    <property type="match status" value="1"/>
</dbReference>
<dbReference type="SUPFAM" id="SSF48695">
    <property type="entry name" value="Multiheme cytochromes"/>
    <property type="match status" value="1"/>
</dbReference>
<dbReference type="PROSITE" id="PS51008">
    <property type="entry name" value="MULTIHEME_CYTC"/>
    <property type="match status" value="1"/>
</dbReference>